<accession>P46644</accession>
<accession>Q9CAZ5</accession>
<evidence type="ECO:0000250" key="1">
    <source>
        <dbReference type="UniProtKB" id="P23542"/>
    </source>
</evidence>
<evidence type="ECO:0000255" key="2"/>
<evidence type="ECO:0000269" key="3">
    <source>
    </source>
</evidence>
<evidence type="ECO:0000269" key="4">
    <source>
    </source>
</evidence>
<evidence type="ECO:0000269" key="5">
    <source>
    </source>
</evidence>
<evidence type="ECO:0000269" key="6">
    <source>
    </source>
</evidence>
<evidence type="ECO:0000269" key="7">
    <source>
    </source>
</evidence>
<evidence type="ECO:0000305" key="8"/>
<proteinExistence type="evidence at protein level"/>
<name>AAT3_ARATH</name>
<keyword id="KW-0032">Aminotransferase</keyword>
<keyword id="KW-0150">Chloroplast</keyword>
<keyword id="KW-0934">Plastid</keyword>
<keyword id="KW-0663">Pyridoxal phosphate</keyword>
<keyword id="KW-1185">Reference proteome</keyword>
<keyword id="KW-0808">Transferase</keyword>
<keyword id="KW-0809">Transit peptide</keyword>
<sequence>MKTTHFSSSSSSDRRIGALLRHLNSGSDSDNLSSLYASPTSGGTGGSVFSHLVQAPEDPILGVTVAYNKDPSPVKLNLGVGAYRTEEGKPLVLNVVRKAEQQLINDRTRIKEYLPIVGLVEFNKLSAKLILGADSPAIRENRITTVECLSGTGSLRVGGEFLAKHYHQKTIYITQPTWGNHPKIFTLAGLTVKTYRYYDPATRGLNFQGLLEDLGAAAPGSIVLLHACAHNPTGVDPTIQQWEQIRKLMRSKGLMPFFDSAYQGFASGSLDTDAKPIRMFVADGGECLVAQSYAKNMGLYGERVGALSIVCKSADVAGRVESQLKLVIRPMYSSPPIHGASIVAVILRDKNLFNEWTLELKAMADRIISMRKQLFEALRTRGTPGDWSHIIKQIGMFTFTGLNPAQVSFMTKEYHIYMTSDGRISMAGLSSKTVPHLADAIHAVVTKAV</sequence>
<protein>
    <recommendedName>
        <fullName>Aspartate aminotransferase 3, chloroplastic</fullName>
        <ecNumber>2.6.1.1</ecNumber>
    </recommendedName>
    <alternativeName>
        <fullName>Protein YELLOW-LEAF-SPECIFIC GENE 4</fullName>
    </alternativeName>
    <alternativeName>
        <fullName>Transaminase A</fullName>
    </alternativeName>
</protein>
<dbReference type="EC" id="2.6.1.1"/>
<dbReference type="EMBL" id="U15034">
    <property type="protein sequence ID" value="AAA79371.1"/>
    <property type="molecule type" value="mRNA"/>
</dbReference>
<dbReference type="EMBL" id="AL163815">
    <property type="protein sequence ID" value="CAB87712.1"/>
    <property type="molecule type" value="Genomic_DNA"/>
</dbReference>
<dbReference type="EMBL" id="CP002688">
    <property type="protein sequence ID" value="AED91691.1"/>
    <property type="molecule type" value="Genomic_DNA"/>
</dbReference>
<dbReference type="EMBL" id="AY050765">
    <property type="protein sequence ID" value="AAK92700.1"/>
    <property type="molecule type" value="mRNA"/>
</dbReference>
<dbReference type="EMBL" id="AY079310">
    <property type="protein sequence ID" value="AAL85041.1"/>
    <property type="molecule type" value="mRNA"/>
</dbReference>
<dbReference type="EMBL" id="AB047807">
    <property type="protein sequence ID" value="BAB32884.1"/>
    <property type="molecule type" value="mRNA"/>
</dbReference>
<dbReference type="PIR" id="T48511">
    <property type="entry name" value="T48511"/>
</dbReference>
<dbReference type="RefSeq" id="NP_196713.1">
    <property type="nucleotide sequence ID" value="NM_121190.3"/>
</dbReference>
<dbReference type="SMR" id="P46644"/>
<dbReference type="BioGRID" id="16302">
    <property type="interactions" value="10"/>
</dbReference>
<dbReference type="FunCoup" id="P46644">
    <property type="interactions" value="2046"/>
</dbReference>
<dbReference type="IntAct" id="P46644">
    <property type="interactions" value="1"/>
</dbReference>
<dbReference type="STRING" id="3702.P46644"/>
<dbReference type="iPTMnet" id="P46644"/>
<dbReference type="PaxDb" id="3702-AT5G11520.1"/>
<dbReference type="ProteomicsDB" id="244522"/>
<dbReference type="EnsemblPlants" id="AT5G11520.1">
    <property type="protein sequence ID" value="AT5G11520.1"/>
    <property type="gene ID" value="AT5G11520"/>
</dbReference>
<dbReference type="GeneID" id="831024"/>
<dbReference type="Gramene" id="AT5G11520.1">
    <property type="protein sequence ID" value="AT5G11520.1"/>
    <property type="gene ID" value="AT5G11520"/>
</dbReference>
<dbReference type="KEGG" id="ath:AT5G11520"/>
<dbReference type="Araport" id="AT5G11520"/>
<dbReference type="TAIR" id="AT5G11520">
    <property type="gene designation" value="ASP3"/>
</dbReference>
<dbReference type="eggNOG" id="KOG1411">
    <property type="taxonomic scope" value="Eukaryota"/>
</dbReference>
<dbReference type="HOGENOM" id="CLU_032440_1_2_1"/>
<dbReference type="InParanoid" id="P46644"/>
<dbReference type="OMA" id="VIDMAYQ"/>
<dbReference type="OrthoDB" id="6752799at2759"/>
<dbReference type="PhylomeDB" id="P46644"/>
<dbReference type="SABIO-RK" id="P46644"/>
<dbReference type="PRO" id="PR:P46644"/>
<dbReference type="Proteomes" id="UP000006548">
    <property type="component" value="Chromosome 5"/>
</dbReference>
<dbReference type="ExpressionAtlas" id="P46644">
    <property type="expression patterns" value="baseline and differential"/>
</dbReference>
<dbReference type="GO" id="GO:0009507">
    <property type="term" value="C:chloroplast"/>
    <property type="evidence" value="ECO:0007669"/>
    <property type="project" value="UniProtKB-SubCell"/>
</dbReference>
<dbReference type="GO" id="GO:0005829">
    <property type="term" value="C:cytosol"/>
    <property type="evidence" value="ECO:0007005"/>
    <property type="project" value="TAIR"/>
</dbReference>
<dbReference type="GO" id="GO:0005777">
    <property type="term" value="C:peroxisome"/>
    <property type="evidence" value="ECO:0000314"/>
    <property type="project" value="TAIR"/>
</dbReference>
<dbReference type="GO" id="GO:0005886">
    <property type="term" value="C:plasma membrane"/>
    <property type="evidence" value="ECO:0007005"/>
    <property type="project" value="TAIR"/>
</dbReference>
<dbReference type="GO" id="GO:0009536">
    <property type="term" value="C:plastid"/>
    <property type="evidence" value="ECO:0000314"/>
    <property type="project" value="TAIR"/>
</dbReference>
<dbReference type="GO" id="GO:0004069">
    <property type="term" value="F:L-aspartate:2-oxoglutarate aminotransferase activity"/>
    <property type="evidence" value="ECO:0000250"/>
    <property type="project" value="UniProtKB"/>
</dbReference>
<dbReference type="GO" id="GO:0030170">
    <property type="term" value="F:pyridoxal phosphate binding"/>
    <property type="evidence" value="ECO:0007669"/>
    <property type="project" value="InterPro"/>
</dbReference>
<dbReference type="GO" id="GO:0006103">
    <property type="term" value="P:2-oxoglutarate metabolic process"/>
    <property type="evidence" value="ECO:0000250"/>
    <property type="project" value="UniProtKB"/>
</dbReference>
<dbReference type="GO" id="GO:0006531">
    <property type="term" value="P:aspartate metabolic process"/>
    <property type="evidence" value="ECO:0000250"/>
    <property type="project" value="UniProtKB"/>
</dbReference>
<dbReference type="GO" id="GO:0009058">
    <property type="term" value="P:biosynthetic process"/>
    <property type="evidence" value="ECO:0007669"/>
    <property type="project" value="InterPro"/>
</dbReference>
<dbReference type="GO" id="GO:0006536">
    <property type="term" value="P:glutamate metabolic process"/>
    <property type="evidence" value="ECO:0000250"/>
    <property type="project" value="UniProtKB"/>
</dbReference>
<dbReference type="GO" id="GO:0010150">
    <property type="term" value="P:leaf senescence"/>
    <property type="evidence" value="ECO:0000270"/>
    <property type="project" value="TAIR"/>
</dbReference>
<dbReference type="CDD" id="cd00609">
    <property type="entry name" value="AAT_like"/>
    <property type="match status" value="1"/>
</dbReference>
<dbReference type="FunFam" id="3.40.640.10:FF:000052">
    <property type="entry name" value="Aspartate aminotransferase"/>
    <property type="match status" value="1"/>
</dbReference>
<dbReference type="FunFam" id="3.90.1150.10:FF:000001">
    <property type="entry name" value="Aspartate aminotransferase"/>
    <property type="match status" value="1"/>
</dbReference>
<dbReference type="Gene3D" id="3.90.1150.10">
    <property type="entry name" value="Aspartate Aminotransferase, domain 1"/>
    <property type="match status" value="1"/>
</dbReference>
<dbReference type="Gene3D" id="3.40.640.10">
    <property type="entry name" value="Type I PLP-dependent aspartate aminotransferase-like (Major domain)"/>
    <property type="match status" value="1"/>
</dbReference>
<dbReference type="InterPro" id="IPR004839">
    <property type="entry name" value="Aminotransferase_I/II_large"/>
</dbReference>
<dbReference type="InterPro" id="IPR000796">
    <property type="entry name" value="Asp_trans"/>
</dbReference>
<dbReference type="InterPro" id="IPR004838">
    <property type="entry name" value="NHTrfase_class1_PyrdxlP-BS"/>
</dbReference>
<dbReference type="InterPro" id="IPR015424">
    <property type="entry name" value="PyrdxlP-dep_Trfase"/>
</dbReference>
<dbReference type="InterPro" id="IPR015421">
    <property type="entry name" value="PyrdxlP-dep_Trfase_major"/>
</dbReference>
<dbReference type="InterPro" id="IPR015422">
    <property type="entry name" value="PyrdxlP-dep_Trfase_small"/>
</dbReference>
<dbReference type="NCBIfam" id="NF006719">
    <property type="entry name" value="PRK09257.1"/>
    <property type="match status" value="1"/>
</dbReference>
<dbReference type="PANTHER" id="PTHR11879">
    <property type="entry name" value="ASPARTATE AMINOTRANSFERASE"/>
    <property type="match status" value="1"/>
</dbReference>
<dbReference type="PANTHER" id="PTHR11879:SF57">
    <property type="entry name" value="ASPARTATE AMINOTRANSFERASE 3, CHLOROPLASTIC"/>
    <property type="match status" value="1"/>
</dbReference>
<dbReference type="Pfam" id="PF00155">
    <property type="entry name" value="Aminotran_1_2"/>
    <property type="match status" value="1"/>
</dbReference>
<dbReference type="PRINTS" id="PR00799">
    <property type="entry name" value="TRANSAMINASE"/>
</dbReference>
<dbReference type="SUPFAM" id="SSF53383">
    <property type="entry name" value="PLP-dependent transferases"/>
    <property type="match status" value="1"/>
</dbReference>
<dbReference type="PROSITE" id="PS00105">
    <property type="entry name" value="AA_TRANSFER_CLASS_1"/>
    <property type="match status" value="1"/>
</dbReference>
<feature type="transit peptide" description="Chloroplast" evidence="2">
    <location>
        <begin position="1"/>
        <end position="43"/>
    </location>
</feature>
<feature type="chain" id="PRO_0000001210" description="Aspartate aminotransferase 3, chloroplastic">
    <location>
        <begin position="44"/>
        <end position="449"/>
    </location>
</feature>
<feature type="binding site" evidence="1">
    <location>
        <position position="81"/>
    </location>
    <ligand>
        <name>L-aspartate</name>
        <dbReference type="ChEBI" id="CHEBI:29991"/>
    </ligand>
</feature>
<feature type="binding site" evidence="1">
    <location>
        <position position="178"/>
    </location>
    <ligand>
        <name>L-aspartate</name>
        <dbReference type="ChEBI" id="CHEBI:29991"/>
    </ligand>
</feature>
<feature type="binding site" evidence="1">
    <location>
        <position position="231"/>
    </location>
    <ligand>
        <name>L-aspartate</name>
        <dbReference type="ChEBI" id="CHEBI:29991"/>
    </ligand>
</feature>
<feature type="binding site" evidence="1">
    <location>
        <position position="423"/>
    </location>
    <ligand>
        <name>L-aspartate</name>
        <dbReference type="ChEBI" id="CHEBI:29991"/>
    </ligand>
</feature>
<feature type="modified residue" description="N6-(pyridoxal phosphate)lysine" evidence="1">
    <location>
        <position position="295"/>
    </location>
</feature>
<reference key="1">
    <citation type="journal article" date="1995" name="Plant J.">
        <title>The aspartate aminotransferase gene family of Arabidopsis encodes isoenzymes localized to three distinct subcellular compartments.</title>
        <authorList>
            <person name="Schultz C.J."/>
            <person name="Coruzzi G.M."/>
        </authorList>
    </citation>
    <scope>NUCLEOTIDE SEQUENCE [MRNA]</scope>
    <scope>FUNCTION</scope>
    <source>
        <strain>cv. Columbia</strain>
        <tissue>Leaf</tissue>
    </source>
</reference>
<reference key="2">
    <citation type="journal article" date="2000" name="Nature">
        <title>Sequence and analysis of chromosome 5 of the plant Arabidopsis thaliana.</title>
        <authorList>
            <person name="Tabata S."/>
            <person name="Kaneko T."/>
            <person name="Nakamura Y."/>
            <person name="Kotani H."/>
            <person name="Kato T."/>
            <person name="Asamizu E."/>
            <person name="Miyajima N."/>
            <person name="Sasamoto S."/>
            <person name="Kimura T."/>
            <person name="Hosouchi T."/>
            <person name="Kawashima K."/>
            <person name="Kohara M."/>
            <person name="Matsumoto M."/>
            <person name="Matsuno A."/>
            <person name="Muraki A."/>
            <person name="Nakayama S."/>
            <person name="Nakazaki N."/>
            <person name="Naruo K."/>
            <person name="Okumura S."/>
            <person name="Shinpo S."/>
            <person name="Takeuchi C."/>
            <person name="Wada T."/>
            <person name="Watanabe A."/>
            <person name="Yamada M."/>
            <person name="Yasuda M."/>
            <person name="Sato S."/>
            <person name="de la Bastide M."/>
            <person name="Huang E."/>
            <person name="Spiegel L."/>
            <person name="Gnoj L."/>
            <person name="O'Shaughnessy A."/>
            <person name="Preston R."/>
            <person name="Habermann K."/>
            <person name="Murray J."/>
            <person name="Johnson D."/>
            <person name="Rohlfing T."/>
            <person name="Nelson J."/>
            <person name="Stoneking T."/>
            <person name="Pepin K."/>
            <person name="Spieth J."/>
            <person name="Sekhon M."/>
            <person name="Armstrong J."/>
            <person name="Becker M."/>
            <person name="Belter E."/>
            <person name="Cordum H."/>
            <person name="Cordes M."/>
            <person name="Courtney L."/>
            <person name="Courtney W."/>
            <person name="Dante M."/>
            <person name="Du H."/>
            <person name="Edwards J."/>
            <person name="Fryman J."/>
            <person name="Haakensen B."/>
            <person name="Lamar E."/>
            <person name="Latreille P."/>
            <person name="Leonard S."/>
            <person name="Meyer R."/>
            <person name="Mulvaney E."/>
            <person name="Ozersky P."/>
            <person name="Riley A."/>
            <person name="Strowmatt C."/>
            <person name="Wagner-McPherson C."/>
            <person name="Wollam A."/>
            <person name="Yoakum M."/>
            <person name="Bell M."/>
            <person name="Dedhia N."/>
            <person name="Parnell L."/>
            <person name="Shah R."/>
            <person name="Rodriguez M."/>
            <person name="Hoon See L."/>
            <person name="Vil D."/>
            <person name="Baker J."/>
            <person name="Kirchoff K."/>
            <person name="Toth K."/>
            <person name="King L."/>
            <person name="Bahret A."/>
            <person name="Miller B."/>
            <person name="Marra M.A."/>
            <person name="Martienssen R."/>
            <person name="McCombie W.R."/>
            <person name="Wilson R.K."/>
            <person name="Murphy G."/>
            <person name="Bancroft I."/>
            <person name="Volckaert G."/>
            <person name="Wambutt R."/>
            <person name="Duesterhoeft A."/>
            <person name="Stiekema W."/>
            <person name="Pohl T."/>
            <person name="Entian K.-D."/>
            <person name="Terryn N."/>
            <person name="Hartley N."/>
            <person name="Bent E."/>
            <person name="Johnson S."/>
            <person name="Langham S.-A."/>
            <person name="McCullagh B."/>
            <person name="Robben J."/>
            <person name="Grymonprez B."/>
            <person name="Zimmermann W."/>
            <person name="Ramsperger U."/>
            <person name="Wedler H."/>
            <person name="Balke K."/>
            <person name="Wedler E."/>
            <person name="Peters S."/>
            <person name="van Staveren M."/>
            <person name="Dirkse W."/>
            <person name="Mooijman P."/>
            <person name="Klein Lankhorst R."/>
            <person name="Weitzenegger T."/>
            <person name="Bothe G."/>
            <person name="Rose M."/>
            <person name="Hauf J."/>
            <person name="Berneiser S."/>
            <person name="Hempel S."/>
            <person name="Feldpausch M."/>
            <person name="Lamberth S."/>
            <person name="Villarroel R."/>
            <person name="Gielen J."/>
            <person name="Ardiles W."/>
            <person name="Bents O."/>
            <person name="Lemcke K."/>
            <person name="Kolesov G."/>
            <person name="Mayer K.F.X."/>
            <person name="Rudd S."/>
            <person name="Schoof H."/>
            <person name="Schueller C."/>
            <person name="Zaccaria P."/>
            <person name="Mewes H.-W."/>
            <person name="Bevan M."/>
            <person name="Fransz P.F."/>
        </authorList>
    </citation>
    <scope>NUCLEOTIDE SEQUENCE [LARGE SCALE GENOMIC DNA]</scope>
    <source>
        <strain>cv. Columbia</strain>
    </source>
</reference>
<reference key="3">
    <citation type="journal article" date="2017" name="Plant J.">
        <title>Araport11: a complete reannotation of the Arabidopsis thaliana reference genome.</title>
        <authorList>
            <person name="Cheng C.Y."/>
            <person name="Krishnakumar V."/>
            <person name="Chan A.P."/>
            <person name="Thibaud-Nissen F."/>
            <person name="Schobel S."/>
            <person name="Town C.D."/>
        </authorList>
    </citation>
    <scope>GENOME REANNOTATION</scope>
    <source>
        <strain>cv. Columbia</strain>
    </source>
</reference>
<reference key="4">
    <citation type="journal article" date="2003" name="Science">
        <title>Empirical analysis of transcriptional activity in the Arabidopsis genome.</title>
        <authorList>
            <person name="Yamada K."/>
            <person name="Lim J."/>
            <person name="Dale J.M."/>
            <person name="Chen H."/>
            <person name="Shinn P."/>
            <person name="Palm C.J."/>
            <person name="Southwick A.M."/>
            <person name="Wu H.C."/>
            <person name="Kim C.J."/>
            <person name="Nguyen M."/>
            <person name="Pham P.K."/>
            <person name="Cheuk R.F."/>
            <person name="Karlin-Newmann G."/>
            <person name="Liu S.X."/>
            <person name="Lam B."/>
            <person name="Sakano H."/>
            <person name="Wu T."/>
            <person name="Yu G."/>
            <person name="Miranda M."/>
            <person name="Quach H.L."/>
            <person name="Tripp M."/>
            <person name="Chang C.H."/>
            <person name="Lee J.M."/>
            <person name="Toriumi M.J."/>
            <person name="Chan M.M."/>
            <person name="Tang C.C."/>
            <person name="Onodera C.S."/>
            <person name="Deng J.M."/>
            <person name="Akiyama K."/>
            <person name="Ansari Y."/>
            <person name="Arakawa T."/>
            <person name="Banh J."/>
            <person name="Banno F."/>
            <person name="Bowser L."/>
            <person name="Brooks S.Y."/>
            <person name="Carninci P."/>
            <person name="Chao Q."/>
            <person name="Choy N."/>
            <person name="Enju A."/>
            <person name="Goldsmith A.D."/>
            <person name="Gurjal M."/>
            <person name="Hansen N.F."/>
            <person name="Hayashizaki Y."/>
            <person name="Johnson-Hopson C."/>
            <person name="Hsuan V.W."/>
            <person name="Iida K."/>
            <person name="Karnes M."/>
            <person name="Khan S."/>
            <person name="Koesema E."/>
            <person name="Ishida J."/>
            <person name="Jiang P.X."/>
            <person name="Jones T."/>
            <person name="Kawai J."/>
            <person name="Kamiya A."/>
            <person name="Meyers C."/>
            <person name="Nakajima M."/>
            <person name="Narusaka M."/>
            <person name="Seki M."/>
            <person name="Sakurai T."/>
            <person name="Satou M."/>
            <person name="Tamse R."/>
            <person name="Vaysberg M."/>
            <person name="Wallender E.K."/>
            <person name="Wong C."/>
            <person name="Yamamura Y."/>
            <person name="Yuan S."/>
            <person name="Shinozaki K."/>
            <person name="Davis R.W."/>
            <person name="Theologis A."/>
            <person name="Ecker J.R."/>
        </authorList>
    </citation>
    <scope>NUCLEOTIDE SEQUENCE [LARGE SCALE MRNA]</scope>
    <source>
        <strain>cv. Columbia</strain>
    </source>
</reference>
<reference key="5">
    <citation type="journal article" date="2001" name="Plant Cell Physiol.">
        <title>Isolation and RNA gel blot analysis of genes that could serve as potential molecular markers for leaf senescence in Arabidopsis thaliana.</title>
        <authorList>
            <person name="Yoshida S."/>
            <person name="Ito M."/>
            <person name="Nishida I."/>
            <person name="Watanabe A."/>
        </authorList>
    </citation>
    <scope>NUCLEOTIDE SEQUENCE [MRNA] OF 177-282</scope>
    <scope>TISSUE SPECIFICITY</scope>
    <scope>DEVELOPMENTAL STAGE</scope>
    <scope>INDUCTION</scope>
</reference>
<reference key="6">
    <citation type="journal article" date="1998" name="Genetics">
        <title>Arabidopsis mutants define an in vivo role for isoenzymes of aspartate aminotransferase in plant nitrogen assimilation.</title>
        <authorList>
            <person name="Schultz C.J."/>
            <person name="Hsu M."/>
            <person name="Miesak B."/>
            <person name="Coruzzi G.M."/>
        </authorList>
    </citation>
    <scope>FUNCTION</scope>
</reference>
<reference key="7">
    <citation type="journal article" date="2004" name="J. Exp. Bot.">
        <title>GFP-labelled Rubisco and aspartate aminotransferase are present in plastid stromules and traffic between plastids.</title>
        <authorList>
            <person name="Kwok E.Y."/>
            <person name="Hanson M.R."/>
        </authorList>
    </citation>
    <scope>TISSUE SPECIFICITY</scope>
    <scope>SUBUNIT</scope>
    <scope>SUBCELLULAR LOCATION</scope>
</reference>
<reference key="8">
    <citation type="journal article" date="2007" name="Mol. Cell. Proteomics">
        <title>Multidimensional protein identification technology (MudPIT) analysis of ubiquitinated proteins in plants.</title>
        <authorList>
            <person name="Maor R."/>
            <person name="Jones A."/>
            <person name="Nuehse T.S."/>
            <person name="Studholme D.J."/>
            <person name="Peck S.C."/>
            <person name="Shirasu K."/>
        </authorList>
    </citation>
    <scope>IDENTIFICATION BY MASS SPECTROMETRY [LARGE SCALE ANALYSIS]</scope>
    <source>
        <strain>cv. Landsberg erecta</strain>
    </source>
</reference>
<reference key="9">
    <citation type="journal article" date="2007" name="Plant Cell">
        <title>Proteome analysis of Arabidopsis leaf peroxisomes reveals novel targeting peptides, metabolic pathways, and defense mechanisms.</title>
        <authorList>
            <person name="Reumann S."/>
            <person name="Babujee L."/>
            <person name="Ma C."/>
            <person name="Wienkoop S."/>
            <person name="Siemsen T."/>
            <person name="Antonicelli G.E."/>
            <person name="Rasche N."/>
            <person name="Lueder F."/>
            <person name="Weckwerth W."/>
            <person name="Jahn O."/>
        </authorList>
    </citation>
    <scope>IDENTIFICATION BY MASS SPECTROMETRY</scope>
</reference>
<reference key="10">
    <citation type="journal article" date="2008" name="FEBS J.">
        <title>Cloning and functional characterization of Arabidopsis thaliana D-amino acid aminotransferase--D-aspartate behavior during germination.</title>
        <authorList>
            <person name="Funakoshi M."/>
            <person name="Sekine M."/>
            <person name="Katane M."/>
            <person name="Furuchi T."/>
            <person name="Yohda M."/>
            <person name="Yoshikawa T."/>
            <person name="Homma H."/>
        </authorList>
    </citation>
    <scope>FUNCTION</scope>
    <scope>CATALYTIC ACTIVITY</scope>
    <scope>BIOPHYSICOCHEMICAL PROPERTIES</scope>
</reference>
<comment type="function">
    <text evidence="5 6">Amino acid aminotransferase important for the metabolism of amino acids and Krebs-cycle related organic acids. No activity with D-Asp or D-Ala as amino donors. In plants, it is involved in nitrogen metabolism and in aspects of carbon and energy metabolism.</text>
</comment>
<comment type="catalytic activity">
    <reaction evidence="5 7">
        <text>L-aspartate + 2-oxoglutarate = oxaloacetate + L-glutamate</text>
        <dbReference type="Rhea" id="RHEA:21824"/>
        <dbReference type="ChEBI" id="CHEBI:16452"/>
        <dbReference type="ChEBI" id="CHEBI:16810"/>
        <dbReference type="ChEBI" id="CHEBI:29985"/>
        <dbReference type="ChEBI" id="CHEBI:29991"/>
        <dbReference type="EC" id="2.6.1.1"/>
    </reaction>
</comment>
<comment type="cofactor">
    <cofactor>
        <name>pyridoxal 5'-phosphate</name>
        <dbReference type="ChEBI" id="CHEBI:597326"/>
    </cofactor>
</comment>
<comment type="biophysicochemical properties">
    <kinetics>
        <KM evidence="5">2.5 mM for L-aspartate</KM>
    </kinetics>
</comment>
<comment type="subunit">
    <text evidence="4">Homodimer.</text>
</comment>
<comment type="subcellular location">
    <subcellularLocation>
        <location evidence="4">Plastid</location>
        <location evidence="4">Chloroplast</location>
    </subcellularLocation>
    <text>accumulates in stromules, which are membrane-bound protrusions of the plastid envelope containing soluble stroma. Stromules are often found connecting plastids within a cell.</text>
</comment>
<comment type="tissue specificity">
    <text evidence="3 4">Expressed in roots, cauline leaves, flowers, hypocotyl epidermis and root hair cells.</text>
</comment>
<comment type="developmental stage">
    <text evidence="3">Up-regulated in leaves during natural senescence.</text>
</comment>
<comment type="induction">
    <text evidence="3">By ethylene and dark.</text>
</comment>
<comment type="miscellaneous">
    <text>In eukaryotes there are cytoplasmic, mitochondrial and chloroplastic isozymes.</text>
</comment>
<comment type="similarity">
    <text evidence="8">Belongs to the class-I pyridoxal-phosphate-dependent aminotransferase family.</text>
</comment>
<gene>
    <name type="primary">ASP3</name>
    <name type="synonym">YLS4</name>
    <name type="ordered locus">At5g11520</name>
    <name type="ORF">F15N18.110</name>
</gene>
<organism>
    <name type="scientific">Arabidopsis thaliana</name>
    <name type="common">Mouse-ear cress</name>
    <dbReference type="NCBI Taxonomy" id="3702"/>
    <lineage>
        <taxon>Eukaryota</taxon>
        <taxon>Viridiplantae</taxon>
        <taxon>Streptophyta</taxon>
        <taxon>Embryophyta</taxon>
        <taxon>Tracheophyta</taxon>
        <taxon>Spermatophyta</taxon>
        <taxon>Magnoliopsida</taxon>
        <taxon>eudicotyledons</taxon>
        <taxon>Gunneridae</taxon>
        <taxon>Pentapetalae</taxon>
        <taxon>rosids</taxon>
        <taxon>malvids</taxon>
        <taxon>Brassicales</taxon>
        <taxon>Brassicaceae</taxon>
        <taxon>Camelineae</taxon>
        <taxon>Arabidopsis</taxon>
    </lineage>
</organism>